<reference key="1">
    <citation type="submission" date="2006-12" db="EMBL/GenBank/DDBJ databases">
        <title>Complete sequence of Shewanella amazonensis SB2B.</title>
        <authorList>
            <consortium name="US DOE Joint Genome Institute"/>
            <person name="Copeland A."/>
            <person name="Lucas S."/>
            <person name="Lapidus A."/>
            <person name="Barry K."/>
            <person name="Detter J.C."/>
            <person name="Glavina del Rio T."/>
            <person name="Hammon N."/>
            <person name="Israni S."/>
            <person name="Dalin E."/>
            <person name="Tice H."/>
            <person name="Pitluck S."/>
            <person name="Munk A.C."/>
            <person name="Brettin T."/>
            <person name="Bruce D."/>
            <person name="Han C."/>
            <person name="Tapia R."/>
            <person name="Gilna P."/>
            <person name="Schmutz J."/>
            <person name="Larimer F."/>
            <person name="Land M."/>
            <person name="Hauser L."/>
            <person name="Kyrpides N."/>
            <person name="Mikhailova N."/>
            <person name="Fredrickson J."/>
            <person name="Richardson P."/>
        </authorList>
    </citation>
    <scope>NUCLEOTIDE SEQUENCE [LARGE SCALE GENOMIC DNA]</scope>
    <source>
        <strain>ATCC BAA-1098 / SB2B</strain>
    </source>
</reference>
<gene>
    <name evidence="1" type="primary">ybeY</name>
    <name type="ordered locus">Sama_2577</name>
</gene>
<feature type="chain" id="PRO_0000284303" description="Endoribonuclease YbeY">
    <location>
        <begin position="1"/>
        <end position="153"/>
    </location>
</feature>
<feature type="binding site" evidence="1">
    <location>
        <position position="114"/>
    </location>
    <ligand>
        <name>Zn(2+)</name>
        <dbReference type="ChEBI" id="CHEBI:29105"/>
        <note>catalytic</note>
    </ligand>
</feature>
<feature type="binding site" evidence="1">
    <location>
        <position position="118"/>
    </location>
    <ligand>
        <name>Zn(2+)</name>
        <dbReference type="ChEBI" id="CHEBI:29105"/>
        <note>catalytic</note>
    </ligand>
</feature>
<feature type="binding site" evidence="1">
    <location>
        <position position="124"/>
    </location>
    <ligand>
        <name>Zn(2+)</name>
        <dbReference type="ChEBI" id="CHEBI:29105"/>
        <note>catalytic</note>
    </ligand>
</feature>
<sequence length="153" mass="16996">MALELALDLQFAVNPGNLPTEAEFETWVRVALGDTLDEAELTIRIVDATESQQLNRDYRGKDKPTNVLSFPFEAPPGMELPLLGDLVICASVVENEALEQHKALEAHWAHMVVHGCLHLLGYDHIDDAEAEEMEALETTLLTGLGYPDPYKEQ</sequence>
<keyword id="KW-0963">Cytoplasm</keyword>
<keyword id="KW-0255">Endonuclease</keyword>
<keyword id="KW-0378">Hydrolase</keyword>
<keyword id="KW-0479">Metal-binding</keyword>
<keyword id="KW-0540">Nuclease</keyword>
<keyword id="KW-1185">Reference proteome</keyword>
<keyword id="KW-0690">Ribosome biogenesis</keyword>
<keyword id="KW-0698">rRNA processing</keyword>
<keyword id="KW-0862">Zinc</keyword>
<organism>
    <name type="scientific">Shewanella amazonensis (strain ATCC BAA-1098 / SB2B)</name>
    <dbReference type="NCBI Taxonomy" id="326297"/>
    <lineage>
        <taxon>Bacteria</taxon>
        <taxon>Pseudomonadati</taxon>
        <taxon>Pseudomonadota</taxon>
        <taxon>Gammaproteobacteria</taxon>
        <taxon>Alteromonadales</taxon>
        <taxon>Shewanellaceae</taxon>
        <taxon>Shewanella</taxon>
    </lineage>
</organism>
<accession>A1S8S3</accession>
<dbReference type="EC" id="3.1.-.-" evidence="1"/>
<dbReference type="EMBL" id="CP000507">
    <property type="protein sequence ID" value="ABM00780.1"/>
    <property type="molecule type" value="Genomic_DNA"/>
</dbReference>
<dbReference type="RefSeq" id="WP_011760686.1">
    <property type="nucleotide sequence ID" value="NC_008700.1"/>
</dbReference>
<dbReference type="SMR" id="A1S8S3"/>
<dbReference type="STRING" id="326297.Sama_2577"/>
<dbReference type="KEGG" id="saz:Sama_2577"/>
<dbReference type="eggNOG" id="COG0319">
    <property type="taxonomic scope" value="Bacteria"/>
</dbReference>
<dbReference type="HOGENOM" id="CLU_106710_0_1_6"/>
<dbReference type="OrthoDB" id="9807740at2"/>
<dbReference type="Proteomes" id="UP000009175">
    <property type="component" value="Chromosome"/>
</dbReference>
<dbReference type="GO" id="GO:0005737">
    <property type="term" value="C:cytoplasm"/>
    <property type="evidence" value="ECO:0007669"/>
    <property type="project" value="UniProtKB-SubCell"/>
</dbReference>
<dbReference type="GO" id="GO:0004222">
    <property type="term" value="F:metalloendopeptidase activity"/>
    <property type="evidence" value="ECO:0007669"/>
    <property type="project" value="InterPro"/>
</dbReference>
<dbReference type="GO" id="GO:0004521">
    <property type="term" value="F:RNA endonuclease activity"/>
    <property type="evidence" value="ECO:0007669"/>
    <property type="project" value="UniProtKB-UniRule"/>
</dbReference>
<dbReference type="GO" id="GO:0008270">
    <property type="term" value="F:zinc ion binding"/>
    <property type="evidence" value="ECO:0007669"/>
    <property type="project" value="UniProtKB-UniRule"/>
</dbReference>
<dbReference type="GO" id="GO:0006364">
    <property type="term" value="P:rRNA processing"/>
    <property type="evidence" value="ECO:0007669"/>
    <property type="project" value="UniProtKB-UniRule"/>
</dbReference>
<dbReference type="Gene3D" id="3.40.390.30">
    <property type="entry name" value="Metalloproteases ('zincins'), catalytic domain"/>
    <property type="match status" value="1"/>
</dbReference>
<dbReference type="HAMAP" id="MF_00009">
    <property type="entry name" value="Endoribonucl_YbeY"/>
    <property type="match status" value="1"/>
</dbReference>
<dbReference type="InterPro" id="IPR023091">
    <property type="entry name" value="MetalPrtase_cat_dom_sf_prd"/>
</dbReference>
<dbReference type="InterPro" id="IPR002036">
    <property type="entry name" value="YbeY"/>
</dbReference>
<dbReference type="InterPro" id="IPR020549">
    <property type="entry name" value="YbeY_CS"/>
</dbReference>
<dbReference type="NCBIfam" id="TIGR00043">
    <property type="entry name" value="rRNA maturation RNase YbeY"/>
    <property type="match status" value="1"/>
</dbReference>
<dbReference type="PANTHER" id="PTHR46986">
    <property type="entry name" value="ENDORIBONUCLEASE YBEY, CHLOROPLASTIC"/>
    <property type="match status" value="1"/>
</dbReference>
<dbReference type="PANTHER" id="PTHR46986:SF1">
    <property type="entry name" value="ENDORIBONUCLEASE YBEY, CHLOROPLASTIC"/>
    <property type="match status" value="1"/>
</dbReference>
<dbReference type="Pfam" id="PF02130">
    <property type="entry name" value="YbeY"/>
    <property type="match status" value="1"/>
</dbReference>
<dbReference type="SUPFAM" id="SSF55486">
    <property type="entry name" value="Metalloproteases ('zincins'), catalytic domain"/>
    <property type="match status" value="1"/>
</dbReference>
<dbReference type="PROSITE" id="PS01306">
    <property type="entry name" value="UPF0054"/>
    <property type="match status" value="1"/>
</dbReference>
<comment type="function">
    <text evidence="1">Single strand-specific metallo-endoribonuclease involved in late-stage 70S ribosome quality control and in maturation of the 3' terminus of the 16S rRNA.</text>
</comment>
<comment type="cofactor">
    <cofactor evidence="1">
        <name>Zn(2+)</name>
        <dbReference type="ChEBI" id="CHEBI:29105"/>
    </cofactor>
    <text evidence="1">Binds 1 zinc ion.</text>
</comment>
<comment type="subcellular location">
    <subcellularLocation>
        <location evidence="1">Cytoplasm</location>
    </subcellularLocation>
</comment>
<comment type="similarity">
    <text evidence="1">Belongs to the endoribonuclease YbeY family.</text>
</comment>
<protein>
    <recommendedName>
        <fullName evidence="1">Endoribonuclease YbeY</fullName>
        <ecNumber evidence="1">3.1.-.-</ecNumber>
    </recommendedName>
</protein>
<proteinExistence type="inferred from homology"/>
<evidence type="ECO:0000255" key="1">
    <source>
        <dbReference type="HAMAP-Rule" id="MF_00009"/>
    </source>
</evidence>
<name>YBEY_SHEAM</name>